<organism>
    <name type="scientific">Proteus mirabilis (strain HI4320)</name>
    <dbReference type="NCBI Taxonomy" id="529507"/>
    <lineage>
        <taxon>Bacteria</taxon>
        <taxon>Pseudomonadati</taxon>
        <taxon>Pseudomonadota</taxon>
        <taxon>Gammaproteobacteria</taxon>
        <taxon>Enterobacterales</taxon>
        <taxon>Morganellaceae</taxon>
        <taxon>Proteus</taxon>
    </lineage>
</organism>
<comment type="function">
    <text evidence="1">Dual-specificity methyltransferase that catalyzes the formation of 5-methyluridine at position 54 (m5U54) in all tRNAs, and that of position 341 (m5U341) in tmRNA (transfer-mRNA).</text>
</comment>
<comment type="catalytic activity">
    <reaction evidence="1">
        <text>uridine(54) in tRNA + S-adenosyl-L-methionine = 5-methyluridine(54) in tRNA + S-adenosyl-L-homocysteine + H(+)</text>
        <dbReference type="Rhea" id="RHEA:42712"/>
        <dbReference type="Rhea" id="RHEA-COMP:10167"/>
        <dbReference type="Rhea" id="RHEA-COMP:10193"/>
        <dbReference type="ChEBI" id="CHEBI:15378"/>
        <dbReference type="ChEBI" id="CHEBI:57856"/>
        <dbReference type="ChEBI" id="CHEBI:59789"/>
        <dbReference type="ChEBI" id="CHEBI:65315"/>
        <dbReference type="ChEBI" id="CHEBI:74447"/>
        <dbReference type="EC" id="2.1.1.35"/>
    </reaction>
</comment>
<comment type="catalytic activity">
    <reaction evidence="1">
        <text>uridine(341) in tmRNA + S-adenosyl-L-methionine = 5-methyluridine(341) in tmRNA + S-adenosyl-L-homocysteine + H(+)</text>
        <dbReference type="Rhea" id="RHEA:43612"/>
        <dbReference type="Rhea" id="RHEA-COMP:10630"/>
        <dbReference type="Rhea" id="RHEA-COMP:10631"/>
        <dbReference type="ChEBI" id="CHEBI:15378"/>
        <dbReference type="ChEBI" id="CHEBI:57856"/>
        <dbReference type="ChEBI" id="CHEBI:59789"/>
        <dbReference type="ChEBI" id="CHEBI:65315"/>
        <dbReference type="ChEBI" id="CHEBI:74447"/>
    </reaction>
</comment>
<comment type="similarity">
    <text evidence="1">Belongs to the class I-like SAM-binding methyltransferase superfamily. RNA M5U methyltransferase family. TrmA subfamily.</text>
</comment>
<dbReference type="EC" id="2.1.1.-" evidence="1"/>
<dbReference type="EC" id="2.1.1.35" evidence="1"/>
<dbReference type="EMBL" id="AM942759">
    <property type="protein sequence ID" value="CAR46359.1"/>
    <property type="molecule type" value="Genomic_DNA"/>
</dbReference>
<dbReference type="RefSeq" id="WP_004249698.1">
    <property type="nucleotide sequence ID" value="NC_010554.1"/>
</dbReference>
<dbReference type="SMR" id="B4F1H4"/>
<dbReference type="EnsemblBacteria" id="CAR46359">
    <property type="protein sequence ID" value="CAR46359"/>
    <property type="gene ID" value="PMI3245"/>
</dbReference>
<dbReference type="GeneID" id="6800934"/>
<dbReference type="KEGG" id="pmr:PMI3245"/>
<dbReference type="eggNOG" id="COG2265">
    <property type="taxonomic scope" value="Bacteria"/>
</dbReference>
<dbReference type="HOGENOM" id="CLU_043022_0_0_6"/>
<dbReference type="Proteomes" id="UP000008319">
    <property type="component" value="Chromosome"/>
</dbReference>
<dbReference type="GO" id="GO:0005829">
    <property type="term" value="C:cytosol"/>
    <property type="evidence" value="ECO:0007669"/>
    <property type="project" value="TreeGrafter"/>
</dbReference>
<dbReference type="GO" id="GO:0019843">
    <property type="term" value="F:rRNA binding"/>
    <property type="evidence" value="ECO:0007669"/>
    <property type="project" value="TreeGrafter"/>
</dbReference>
<dbReference type="GO" id="GO:0030697">
    <property type="term" value="F:tRNA (uracil(54)-C5)-methyltransferase activity, S-adenosyl methionine-dependent"/>
    <property type="evidence" value="ECO:0007669"/>
    <property type="project" value="UniProtKB-UniRule"/>
</dbReference>
<dbReference type="GO" id="GO:0000049">
    <property type="term" value="F:tRNA binding"/>
    <property type="evidence" value="ECO:0007669"/>
    <property type="project" value="TreeGrafter"/>
</dbReference>
<dbReference type="GO" id="GO:0030488">
    <property type="term" value="P:tRNA methylation"/>
    <property type="evidence" value="ECO:0007669"/>
    <property type="project" value="UniProtKB-UniRule"/>
</dbReference>
<dbReference type="CDD" id="cd02440">
    <property type="entry name" value="AdoMet_MTases"/>
    <property type="match status" value="1"/>
</dbReference>
<dbReference type="FunFam" id="2.40.50.1070:FF:000001">
    <property type="entry name" value="tRNA/tmRNA (uracil-C(5))-methyltransferase"/>
    <property type="match status" value="1"/>
</dbReference>
<dbReference type="FunFam" id="3.40.50.150:FF:000012">
    <property type="entry name" value="tRNA/tmRNA (uracil-C(5))-methyltransferase"/>
    <property type="match status" value="1"/>
</dbReference>
<dbReference type="Gene3D" id="2.40.50.1070">
    <property type="match status" value="1"/>
</dbReference>
<dbReference type="Gene3D" id="3.40.50.150">
    <property type="entry name" value="Vaccinia Virus protein VP39"/>
    <property type="match status" value="1"/>
</dbReference>
<dbReference type="HAMAP" id="MF_01011">
    <property type="entry name" value="RNA_methyltr_TrmA"/>
    <property type="match status" value="1"/>
</dbReference>
<dbReference type="InterPro" id="IPR030390">
    <property type="entry name" value="MeTrfase_TrmA_AS"/>
</dbReference>
<dbReference type="InterPro" id="IPR030391">
    <property type="entry name" value="MeTrfase_TrmA_CS"/>
</dbReference>
<dbReference type="InterPro" id="IPR029063">
    <property type="entry name" value="SAM-dependent_MTases_sf"/>
</dbReference>
<dbReference type="InterPro" id="IPR011869">
    <property type="entry name" value="TrmA_MeTrfase"/>
</dbReference>
<dbReference type="InterPro" id="IPR010280">
    <property type="entry name" value="U5_MeTrfase_fam"/>
</dbReference>
<dbReference type="NCBIfam" id="TIGR02143">
    <property type="entry name" value="trmA_only"/>
    <property type="match status" value="1"/>
</dbReference>
<dbReference type="PANTHER" id="PTHR47790">
    <property type="entry name" value="TRNA/TMRNA (URACIL-C(5))-METHYLTRANSFERASE"/>
    <property type="match status" value="1"/>
</dbReference>
<dbReference type="PANTHER" id="PTHR47790:SF2">
    <property type="entry name" value="TRNA_TMRNA (URACIL-C(5))-METHYLTRANSFERASE"/>
    <property type="match status" value="1"/>
</dbReference>
<dbReference type="Pfam" id="PF05958">
    <property type="entry name" value="tRNA_U5-meth_tr"/>
    <property type="match status" value="1"/>
</dbReference>
<dbReference type="SUPFAM" id="SSF53335">
    <property type="entry name" value="S-adenosyl-L-methionine-dependent methyltransferases"/>
    <property type="match status" value="1"/>
</dbReference>
<dbReference type="PROSITE" id="PS51687">
    <property type="entry name" value="SAM_MT_RNA_M5U"/>
    <property type="match status" value="1"/>
</dbReference>
<dbReference type="PROSITE" id="PS01230">
    <property type="entry name" value="TRMA_1"/>
    <property type="match status" value="1"/>
</dbReference>
<dbReference type="PROSITE" id="PS01231">
    <property type="entry name" value="TRMA_2"/>
    <property type="match status" value="1"/>
</dbReference>
<name>TRMA_PROMH</name>
<reference key="1">
    <citation type="journal article" date="2008" name="J. Bacteriol.">
        <title>Complete genome sequence of uropathogenic Proteus mirabilis, a master of both adherence and motility.</title>
        <authorList>
            <person name="Pearson M.M."/>
            <person name="Sebaihia M."/>
            <person name="Churcher C."/>
            <person name="Quail M.A."/>
            <person name="Seshasayee A.S."/>
            <person name="Luscombe N.M."/>
            <person name="Abdellah Z."/>
            <person name="Arrosmith C."/>
            <person name="Atkin B."/>
            <person name="Chillingworth T."/>
            <person name="Hauser H."/>
            <person name="Jagels K."/>
            <person name="Moule S."/>
            <person name="Mungall K."/>
            <person name="Norbertczak H."/>
            <person name="Rabbinowitsch E."/>
            <person name="Walker D."/>
            <person name="Whithead S."/>
            <person name="Thomson N.R."/>
            <person name="Rather P.N."/>
            <person name="Parkhill J."/>
            <person name="Mobley H.L.T."/>
        </authorList>
    </citation>
    <scope>NUCLEOTIDE SEQUENCE [LARGE SCALE GENOMIC DNA]</scope>
    <source>
        <strain>HI4320</strain>
    </source>
</reference>
<proteinExistence type="inferred from homology"/>
<protein>
    <recommendedName>
        <fullName evidence="1">tRNA/tmRNA (uracil-C(5))-methyltransferase</fullName>
        <ecNumber evidence="1">2.1.1.-</ecNumber>
        <ecNumber evidence="1">2.1.1.35</ecNumber>
    </recommendedName>
    <alternativeName>
        <fullName evidence="1">tRNA (uracil(54)-C(5))-methyltransferase</fullName>
    </alternativeName>
    <alternativeName>
        <fullName evidence="1">tRNA(m5U54)-methyltransferase</fullName>
        <shortName evidence="1">RUMT</shortName>
    </alternativeName>
    <alternativeName>
        <fullName evidence="1">tmRNA (uracil(341)-C(5))-methyltransferase</fullName>
    </alternativeName>
</protein>
<sequence length="365" mass="42387">MQNSLPTQTYQSQLNEKTERLQKMMAPFNAPNVEVFSSPEQHYRMRAEFRIWHEQDALYHIMFDQETKQRIRVDQFPVASQLINQMMVALLAEIKDKPTLRHKLFQIDYLSTLSNKIIVSLLYHKKIDETWQQEATALRQTLIAQGFDVQLIGRAYKTKIMLDNDFVDEVLPVAGQQMIYRQVENSFTQPNAQVNIKMLEWALSVTENSTGDLLELYCGNGNFSLALARNFKRVLATEIAKPSVHAAQYNIAMNHIDNVKIIRMSAEDFTQAMNGVREFKRLEGINLQDYQCETIFVDPPRSGLDEKTVELVKNYSRILYISCNPQTLCQNLETLIKTHKISKLALFDQFPYTHHMECGVLLEKR</sequence>
<accession>B4F1H4</accession>
<feature type="chain" id="PRO_0000388562" description="tRNA/tmRNA (uracil-C(5))-methyltransferase">
    <location>
        <begin position="1"/>
        <end position="365"/>
    </location>
</feature>
<feature type="active site" description="Nucleophile" evidence="1">
    <location>
        <position position="323"/>
    </location>
</feature>
<feature type="active site" description="Proton acceptor" evidence="1">
    <location>
        <position position="357"/>
    </location>
</feature>
<feature type="binding site" evidence="1">
    <location>
        <position position="189"/>
    </location>
    <ligand>
        <name>S-adenosyl-L-methionine</name>
        <dbReference type="ChEBI" id="CHEBI:59789"/>
    </ligand>
</feature>
<feature type="binding site" evidence="1">
    <location>
        <position position="217"/>
    </location>
    <ligand>
        <name>S-adenosyl-L-methionine</name>
        <dbReference type="ChEBI" id="CHEBI:59789"/>
    </ligand>
</feature>
<feature type="binding site" evidence="1">
    <location>
        <position position="222"/>
    </location>
    <ligand>
        <name>S-adenosyl-L-methionine</name>
        <dbReference type="ChEBI" id="CHEBI:59789"/>
    </ligand>
</feature>
<feature type="binding site" evidence="1">
    <location>
        <position position="238"/>
    </location>
    <ligand>
        <name>S-adenosyl-L-methionine</name>
        <dbReference type="ChEBI" id="CHEBI:59789"/>
    </ligand>
</feature>
<feature type="binding site" evidence="1">
    <location>
        <position position="298"/>
    </location>
    <ligand>
        <name>S-adenosyl-L-methionine</name>
        <dbReference type="ChEBI" id="CHEBI:59789"/>
    </ligand>
</feature>
<keyword id="KW-0489">Methyltransferase</keyword>
<keyword id="KW-1185">Reference proteome</keyword>
<keyword id="KW-0949">S-adenosyl-L-methionine</keyword>
<keyword id="KW-0808">Transferase</keyword>
<keyword id="KW-0819">tRNA processing</keyword>
<evidence type="ECO:0000255" key="1">
    <source>
        <dbReference type="HAMAP-Rule" id="MF_01011"/>
    </source>
</evidence>
<gene>
    <name evidence="1" type="primary">trmA</name>
    <name type="ordered locus">PMI3245</name>
</gene>